<feature type="chain" id="PRO_1000140869" description="Small ribosomal subunit protein uS5">
    <location>
        <begin position="1"/>
        <end position="195"/>
    </location>
</feature>
<feature type="domain" description="S5 DRBM" evidence="1">
    <location>
        <begin position="23"/>
        <end position="86"/>
    </location>
</feature>
<feature type="region of interest" description="Disordered" evidence="2">
    <location>
        <begin position="1"/>
        <end position="20"/>
    </location>
</feature>
<feature type="region of interest" description="Disordered" evidence="2">
    <location>
        <begin position="161"/>
        <end position="195"/>
    </location>
</feature>
<evidence type="ECO:0000255" key="1">
    <source>
        <dbReference type="HAMAP-Rule" id="MF_01307"/>
    </source>
</evidence>
<evidence type="ECO:0000256" key="2">
    <source>
        <dbReference type="SAM" id="MobiDB-lite"/>
    </source>
</evidence>
<evidence type="ECO:0000305" key="3"/>
<gene>
    <name evidence="1" type="primary">rpsE</name>
    <name type="ordered locus">Mrad2831_2201</name>
</gene>
<accession>B1LWQ9</accession>
<dbReference type="EMBL" id="CP001001">
    <property type="protein sequence ID" value="ACB24196.1"/>
    <property type="molecule type" value="Genomic_DNA"/>
</dbReference>
<dbReference type="RefSeq" id="WP_012319173.1">
    <property type="nucleotide sequence ID" value="NC_010505.1"/>
</dbReference>
<dbReference type="SMR" id="B1LWQ9"/>
<dbReference type="STRING" id="426355.Mrad2831_2201"/>
<dbReference type="GeneID" id="6138233"/>
<dbReference type="KEGG" id="mrd:Mrad2831_2201"/>
<dbReference type="eggNOG" id="COG0098">
    <property type="taxonomic scope" value="Bacteria"/>
</dbReference>
<dbReference type="HOGENOM" id="CLU_065898_2_2_5"/>
<dbReference type="OrthoDB" id="9809045at2"/>
<dbReference type="Proteomes" id="UP000006589">
    <property type="component" value="Chromosome"/>
</dbReference>
<dbReference type="GO" id="GO:0015935">
    <property type="term" value="C:small ribosomal subunit"/>
    <property type="evidence" value="ECO:0007669"/>
    <property type="project" value="InterPro"/>
</dbReference>
<dbReference type="GO" id="GO:0019843">
    <property type="term" value="F:rRNA binding"/>
    <property type="evidence" value="ECO:0007669"/>
    <property type="project" value="UniProtKB-UniRule"/>
</dbReference>
<dbReference type="GO" id="GO:0003735">
    <property type="term" value="F:structural constituent of ribosome"/>
    <property type="evidence" value="ECO:0007669"/>
    <property type="project" value="InterPro"/>
</dbReference>
<dbReference type="GO" id="GO:0006412">
    <property type="term" value="P:translation"/>
    <property type="evidence" value="ECO:0007669"/>
    <property type="project" value="UniProtKB-UniRule"/>
</dbReference>
<dbReference type="FunFam" id="3.30.160.20:FF:000001">
    <property type="entry name" value="30S ribosomal protein S5"/>
    <property type="match status" value="1"/>
</dbReference>
<dbReference type="FunFam" id="3.30.230.10:FF:000002">
    <property type="entry name" value="30S ribosomal protein S5"/>
    <property type="match status" value="1"/>
</dbReference>
<dbReference type="Gene3D" id="3.30.160.20">
    <property type="match status" value="1"/>
</dbReference>
<dbReference type="Gene3D" id="3.30.230.10">
    <property type="match status" value="1"/>
</dbReference>
<dbReference type="HAMAP" id="MF_01307_B">
    <property type="entry name" value="Ribosomal_uS5_B"/>
    <property type="match status" value="1"/>
</dbReference>
<dbReference type="InterPro" id="IPR020568">
    <property type="entry name" value="Ribosomal_Su5_D2-typ_SF"/>
</dbReference>
<dbReference type="InterPro" id="IPR000851">
    <property type="entry name" value="Ribosomal_uS5"/>
</dbReference>
<dbReference type="InterPro" id="IPR005712">
    <property type="entry name" value="Ribosomal_uS5_bac-type"/>
</dbReference>
<dbReference type="InterPro" id="IPR005324">
    <property type="entry name" value="Ribosomal_uS5_C"/>
</dbReference>
<dbReference type="InterPro" id="IPR013810">
    <property type="entry name" value="Ribosomal_uS5_N"/>
</dbReference>
<dbReference type="InterPro" id="IPR018192">
    <property type="entry name" value="Ribosomal_uS5_N_CS"/>
</dbReference>
<dbReference type="InterPro" id="IPR014721">
    <property type="entry name" value="Ribsml_uS5_D2-typ_fold_subgr"/>
</dbReference>
<dbReference type="NCBIfam" id="TIGR01021">
    <property type="entry name" value="rpsE_bact"/>
    <property type="match status" value="1"/>
</dbReference>
<dbReference type="PANTHER" id="PTHR48277">
    <property type="entry name" value="MITOCHONDRIAL RIBOSOMAL PROTEIN S5"/>
    <property type="match status" value="1"/>
</dbReference>
<dbReference type="PANTHER" id="PTHR48277:SF1">
    <property type="entry name" value="MITOCHONDRIAL RIBOSOMAL PROTEIN S5"/>
    <property type="match status" value="1"/>
</dbReference>
<dbReference type="Pfam" id="PF00333">
    <property type="entry name" value="Ribosomal_S5"/>
    <property type="match status" value="1"/>
</dbReference>
<dbReference type="Pfam" id="PF03719">
    <property type="entry name" value="Ribosomal_S5_C"/>
    <property type="match status" value="1"/>
</dbReference>
<dbReference type="SUPFAM" id="SSF54768">
    <property type="entry name" value="dsRNA-binding domain-like"/>
    <property type="match status" value="1"/>
</dbReference>
<dbReference type="SUPFAM" id="SSF54211">
    <property type="entry name" value="Ribosomal protein S5 domain 2-like"/>
    <property type="match status" value="1"/>
</dbReference>
<dbReference type="PROSITE" id="PS00585">
    <property type="entry name" value="RIBOSOMAL_S5"/>
    <property type="match status" value="1"/>
</dbReference>
<dbReference type="PROSITE" id="PS50881">
    <property type="entry name" value="S5_DSRBD"/>
    <property type="match status" value="1"/>
</dbReference>
<name>RS5_METRJ</name>
<protein>
    <recommendedName>
        <fullName evidence="1">Small ribosomal subunit protein uS5</fullName>
    </recommendedName>
    <alternativeName>
        <fullName evidence="3">30S ribosomal protein S5</fullName>
    </alternativeName>
</protein>
<proteinExistence type="inferred from homology"/>
<organism>
    <name type="scientific">Methylobacterium radiotolerans (strain ATCC 27329 / DSM 1819 / JCM 2831 / NBRC 15690 / NCIMB 10815 / 0-1)</name>
    <dbReference type="NCBI Taxonomy" id="426355"/>
    <lineage>
        <taxon>Bacteria</taxon>
        <taxon>Pseudomonadati</taxon>
        <taxon>Pseudomonadota</taxon>
        <taxon>Alphaproteobacteria</taxon>
        <taxon>Hyphomicrobiales</taxon>
        <taxon>Methylobacteriaceae</taxon>
        <taxon>Methylobacterium</taxon>
    </lineage>
</organism>
<reference key="1">
    <citation type="submission" date="2008-03" db="EMBL/GenBank/DDBJ databases">
        <title>Complete sequence of chromosome of Methylobacterium radiotolerans JCM 2831.</title>
        <authorList>
            <consortium name="US DOE Joint Genome Institute"/>
            <person name="Copeland A."/>
            <person name="Lucas S."/>
            <person name="Lapidus A."/>
            <person name="Glavina del Rio T."/>
            <person name="Dalin E."/>
            <person name="Tice H."/>
            <person name="Bruce D."/>
            <person name="Goodwin L."/>
            <person name="Pitluck S."/>
            <person name="Kiss H."/>
            <person name="Brettin T."/>
            <person name="Detter J.C."/>
            <person name="Han C."/>
            <person name="Kuske C.R."/>
            <person name="Schmutz J."/>
            <person name="Larimer F."/>
            <person name="Land M."/>
            <person name="Hauser L."/>
            <person name="Kyrpides N."/>
            <person name="Mikhailova N."/>
            <person name="Marx C.J."/>
            <person name="Richardson P."/>
        </authorList>
    </citation>
    <scope>NUCLEOTIDE SEQUENCE [LARGE SCALE GENOMIC DNA]</scope>
    <source>
        <strain>ATCC 27329 / DSM 1819 / JCM 2831 / NBRC 15690 / NCIMB 10815 / 0-1</strain>
    </source>
</reference>
<comment type="function">
    <text evidence="1">With S4 and S12 plays an important role in translational accuracy.</text>
</comment>
<comment type="function">
    <text evidence="1">Located at the back of the 30S subunit body where it stabilizes the conformation of the head with respect to the body.</text>
</comment>
<comment type="subunit">
    <text evidence="1">Part of the 30S ribosomal subunit. Contacts proteins S4 and S8.</text>
</comment>
<comment type="domain">
    <text>The N-terminal domain interacts with the head of the 30S subunit; the C-terminal domain interacts with the body and contacts protein S4. The interaction surface between S4 and S5 is involved in control of translational fidelity.</text>
</comment>
<comment type="similarity">
    <text evidence="1">Belongs to the universal ribosomal protein uS5 family.</text>
</comment>
<keyword id="KW-0687">Ribonucleoprotein</keyword>
<keyword id="KW-0689">Ribosomal protein</keyword>
<keyword id="KW-0694">RNA-binding</keyword>
<keyword id="KW-0699">rRNA-binding</keyword>
<sequence>MAREREGGGRGRREDREERDSEFVDKLVHINRVAKVVKGGRRFGFAALVVVGDQKGRVGFGHGKAREVPEAIRKATEAAKRGLIRVSLREGRTLHHDVNGRHGAGKVILRAAPQGTGIIAGGPMRAVFETLGMQDVVAKSLGSSNPYNLVRATFEALKNEDSPRSVAARRGIKVSTLQSRRRDADPADQSEAAVA</sequence>